<feature type="chain" id="PRO_0000075328" description="Peptidyl-prolyl cis-trans isomerase FKBP5">
    <location>
        <begin position="1"/>
        <end position="457"/>
    </location>
</feature>
<feature type="domain" description="PPIase FKBP-type 1" evidence="3">
    <location>
        <begin position="50"/>
        <end position="138"/>
    </location>
</feature>
<feature type="domain" description="PPIase FKBP-type 2" evidence="3">
    <location>
        <begin position="165"/>
        <end position="251"/>
    </location>
</feature>
<feature type="repeat" description="TPR 1">
    <location>
        <begin position="268"/>
        <end position="301"/>
    </location>
</feature>
<feature type="repeat" description="TPR 2">
    <location>
        <begin position="317"/>
        <end position="350"/>
    </location>
</feature>
<feature type="repeat" description="TPR 3">
    <location>
        <begin position="351"/>
        <end position="384"/>
    </location>
</feature>
<feature type="region of interest" description="Disordered" evidence="4">
    <location>
        <begin position="1"/>
        <end position="26"/>
    </location>
</feature>
<feature type="region of interest" description="Disordered" evidence="4">
    <location>
        <begin position="421"/>
        <end position="457"/>
    </location>
</feature>
<feature type="compositionally biased region" description="Basic and acidic residues" evidence="4">
    <location>
        <begin position="447"/>
        <end position="457"/>
    </location>
</feature>
<feature type="modified residue" description="N-acetylmethionine" evidence="1">
    <location>
        <position position="1"/>
    </location>
</feature>
<feature type="modified residue" description="N6-acetyllysine" evidence="1">
    <location>
        <position position="28"/>
    </location>
</feature>
<feature type="modified residue" description="Phosphoserine" evidence="1">
    <location>
        <position position="445"/>
    </location>
</feature>
<feature type="strand" evidence="7">
    <location>
        <begin position="34"/>
        <end position="36"/>
    </location>
</feature>
<feature type="strand" evidence="7">
    <location>
        <begin position="52"/>
        <end position="56"/>
    </location>
</feature>
<feature type="strand" evidence="7">
    <location>
        <begin position="77"/>
        <end position="80"/>
    </location>
</feature>
<feature type="strand" evidence="7">
    <location>
        <begin position="83"/>
        <end position="86"/>
    </location>
</feature>
<feature type="helix" evidence="7">
    <location>
        <begin position="88"/>
        <end position="92"/>
    </location>
</feature>
<feature type="turn" evidence="7">
    <location>
        <begin position="94"/>
        <end position="96"/>
    </location>
</feature>
<feature type="strand" evidence="7">
    <location>
        <begin position="103"/>
        <end position="106"/>
    </location>
</feature>
<feature type="turn" evidence="7">
    <location>
        <begin position="115"/>
        <end position="117"/>
    </location>
</feature>
<feature type="turn" evidence="7">
    <location>
        <begin position="119"/>
        <end position="121"/>
    </location>
</feature>
<feature type="strand" evidence="7">
    <location>
        <begin position="129"/>
        <end position="138"/>
    </location>
</feature>
<feature type="strand" evidence="7">
    <location>
        <begin position="144"/>
        <end position="154"/>
    </location>
</feature>
<feature type="strand" evidence="7">
    <location>
        <begin position="167"/>
        <end position="176"/>
    </location>
</feature>
<feature type="strand" evidence="7">
    <location>
        <begin position="179"/>
        <end position="189"/>
    </location>
</feature>
<feature type="helix" evidence="7">
    <location>
        <begin position="193"/>
        <end position="196"/>
    </location>
</feature>
<feature type="helix" evidence="7">
    <location>
        <begin position="200"/>
        <end position="206"/>
    </location>
</feature>
<feature type="strand" evidence="7">
    <location>
        <begin position="214"/>
        <end position="219"/>
    </location>
</feature>
<feature type="helix" evidence="7">
    <location>
        <begin position="221"/>
        <end position="223"/>
    </location>
</feature>
<feature type="turn" evidence="7">
    <location>
        <begin position="231"/>
        <end position="234"/>
    </location>
</feature>
<feature type="strand" evidence="7">
    <location>
        <begin position="241"/>
        <end position="251"/>
    </location>
</feature>
<feature type="helix" evidence="7">
    <location>
        <begin position="256"/>
        <end position="258"/>
    </location>
</feature>
<feature type="helix" evidence="7">
    <location>
        <begin position="261"/>
        <end position="280"/>
    </location>
</feature>
<feature type="helix" evidence="7">
    <location>
        <begin position="284"/>
        <end position="298"/>
    </location>
</feature>
<feature type="helix" evidence="7">
    <location>
        <begin position="306"/>
        <end position="329"/>
    </location>
</feature>
<feature type="helix" evidence="7">
    <location>
        <begin position="333"/>
        <end position="346"/>
    </location>
</feature>
<feature type="helix" evidence="7">
    <location>
        <begin position="351"/>
        <end position="363"/>
    </location>
</feature>
<feature type="helix" evidence="7">
    <location>
        <begin position="367"/>
        <end position="379"/>
    </location>
</feature>
<feature type="helix" evidence="7">
    <location>
        <begin position="385"/>
        <end position="417"/>
    </location>
</feature>
<name>FKBP5_SAIBB</name>
<gene>
    <name type="primary">FKBP5</name>
    <name type="synonym">FKBP51</name>
</gene>
<comment type="function">
    <text evidence="1 5 6">Immunophilin protein with PPIase and co-chaperone activities. Component of unligated steroid receptors heterocomplexes through interaction with heat-shock protein 90 (HSP90) (PubMed:12538866). Plays a role in the intracellular trafficking of heterooligomeric forms of steroid hormone receptors maintaining the complex into the cytoplasm when unliganded (PubMed:11089542). Acts as a regulator of Akt/AKT1 activity by promoting the interaction between Akt/AKT1 and PHLPP1, thereby enhancing dephosphorylation and subsequent activation of Akt/AKT1. Interacts with IKBKE and IKBKB which facilitates IKK complex assembly leading to increased IKBKE and IKBKB kinase activity, NF-kappaB activation, and IFN production (By similarity).</text>
</comment>
<comment type="catalytic activity">
    <reaction evidence="1">
        <text>[protein]-peptidylproline (omega=180) = [protein]-peptidylproline (omega=0)</text>
        <dbReference type="Rhea" id="RHEA:16237"/>
        <dbReference type="Rhea" id="RHEA-COMP:10747"/>
        <dbReference type="Rhea" id="RHEA-COMP:10748"/>
        <dbReference type="ChEBI" id="CHEBI:83833"/>
        <dbReference type="ChEBI" id="CHEBI:83834"/>
        <dbReference type="EC" id="5.2.1.8"/>
    </reaction>
</comment>
<comment type="activity regulation">
    <text evidence="2">Inhibited by both FK506 and rapamycin.</text>
</comment>
<comment type="subunit">
    <text evidence="1 2">Part of a heteromultimeric cytoplasmic complex with HSP90AA1, HSPA1A/HSPA1B and steroid receptors. Upon ligand binding dissociates from the complex and FKBP4 takes its place (By similarity). Interacts with functionally mature heterooligomeric progesterone receptor complexes along with HSP90 and TEBP (By similarity). Interacts with NR3C1 (By similarity). Interacts with Akt/AKT1 and PHLPP1; enhancing dephosphorylation and subsequent activation of Akt/AKT1 (By similarity). Interacts with IFI44L; this interaction modulates the kinase activity of IKBKB and IKBKE (By similarity). Interacts with IKBKB and IKBKE (By similarity).</text>
</comment>
<comment type="subcellular location">
    <subcellularLocation>
        <location evidence="5">Cytoplasm</location>
    </subcellularLocation>
    <subcellularLocation>
        <location evidence="2">Nucleus</location>
    </subcellularLocation>
</comment>
<comment type="PTM">
    <text evidence="1">Acetylation impairs ability to promote interaction between Akt/AKT1 and PHLPP1. Deacetylation by SIRT7 promotes interaction between Akt/AKT1 and PHLPP1, leading to suppress Akt/AKT1 activation.</text>
</comment>
<comment type="PTM">
    <text evidence="1">Ubiquitinated, leading to degradation in a proteasome-dependent manner. Deubiquitinated by USP49, leading to stabilization.</text>
</comment>
<comment type="miscellaneous">
    <text evidence="5">The relative resistance of squirrel monkeys to glucocorticoids is associated with a high level of expression of FKBP5, but is also due to intrinsic differences between the human and the monkey proteins. Human FKBP5 has a much lower effect on glucocorticoid sensitivity.</text>
</comment>
<dbReference type="EC" id="5.2.1.8" evidence="1"/>
<dbReference type="EMBL" id="AF140759">
    <property type="protein sequence ID" value="AAD32678.1"/>
    <property type="molecule type" value="mRNA"/>
</dbReference>
<dbReference type="RefSeq" id="NP_001266943.1">
    <property type="nucleotide sequence ID" value="NM_001280014.1"/>
</dbReference>
<dbReference type="RefSeq" id="XP_010332065.1">
    <property type="nucleotide sequence ID" value="XM_010333763.2"/>
</dbReference>
<dbReference type="RefSeq" id="XP_039320843.1">
    <property type="nucleotide sequence ID" value="XM_039464909.1"/>
</dbReference>
<dbReference type="RefSeq" id="XP_039320847.1">
    <property type="nucleotide sequence ID" value="XM_039464913.1"/>
</dbReference>
<dbReference type="PDB" id="1KT1">
    <property type="method" value="X-ray"/>
    <property type="resolution" value="2.80 A"/>
    <property type="chains" value="A=1-457"/>
</dbReference>
<dbReference type="PDBsum" id="1KT1"/>
<dbReference type="SMR" id="Q9XSH5"/>
<dbReference type="STRING" id="39432.ENSSBOP00000020685"/>
<dbReference type="Ensembl" id="ENSSBOT00000037518.1">
    <property type="protein sequence ID" value="ENSSBOP00000020685.1"/>
    <property type="gene ID" value="ENSSBOG00000026900.1"/>
</dbReference>
<dbReference type="GeneID" id="101034484"/>
<dbReference type="KEGG" id="sbq:101034484"/>
<dbReference type="CTD" id="2289"/>
<dbReference type="GeneTree" id="ENSGT00940000158726"/>
<dbReference type="EvolutionaryTrace" id="Q9XSH5"/>
<dbReference type="Proteomes" id="UP000233220">
    <property type="component" value="Unplaced"/>
</dbReference>
<dbReference type="GO" id="GO:0005829">
    <property type="term" value="C:cytosol"/>
    <property type="evidence" value="ECO:0007669"/>
    <property type="project" value="Ensembl"/>
</dbReference>
<dbReference type="GO" id="GO:0005654">
    <property type="term" value="C:nucleoplasm"/>
    <property type="evidence" value="ECO:0007669"/>
    <property type="project" value="Ensembl"/>
</dbReference>
<dbReference type="GO" id="GO:0031072">
    <property type="term" value="F:heat shock protein binding"/>
    <property type="evidence" value="ECO:0007669"/>
    <property type="project" value="Ensembl"/>
</dbReference>
<dbReference type="GO" id="GO:0003755">
    <property type="term" value="F:peptidyl-prolyl cis-trans isomerase activity"/>
    <property type="evidence" value="ECO:0000250"/>
    <property type="project" value="UniProtKB"/>
</dbReference>
<dbReference type="GO" id="GO:0030674">
    <property type="term" value="F:protein-macromolecule adaptor activity"/>
    <property type="evidence" value="ECO:0007669"/>
    <property type="project" value="Ensembl"/>
</dbReference>
<dbReference type="GO" id="GO:0061077">
    <property type="term" value="P:chaperone-mediated protein folding"/>
    <property type="evidence" value="ECO:0000250"/>
    <property type="project" value="UniProtKB"/>
</dbReference>
<dbReference type="GO" id="GO:0009617">
    <property type="term" value="P:response to bacterium"/>
    <property type="evidence" value="ECO:0007669"/>
    <property type="project" value="Ensembl"/>
</dbReference>
<dbReference type="FunFam" id="1.25.40.10:FF:000008">
    <property type="entry name" value="Peptidylprolyl isomerase"/>
    <property type="match status" value="1"/>
</dbReference>
<dbReference type="FunFam" id="3.10.50.40:FF:000011">
    <property type="entry name" value="Peptidylprolyl isomerase"/>
    <property type="match status" value="1"/>
</dbReference>
<dbReference type="FunFam" id="3.10.50.40:FF:000013">
    <property type="entry name" value="Peptidylprolyl isomerase"/>
    <property type="match status" value="1"/>
</dbReference>
<dbReference type="Gene3D" id="3.10.50.40">
    <property type="match status" value="2"/>
</dbReference>
<dbReference type="Gene3D" id="1.25.40.10">
    <property type="entry name" value="Tetratricopeptide repeat domain"/>
    <property type="match status" value="1"/>
</dbReference>
<dbReference type="InterPro" id="IPR050754">
    <property type="entry name" value="FKBP4/5/8-like"/>
</dbReference>
<dbReference type="InterPro" id="IPR046357">
    <property type="entry name" value="PPIase_dom_sf"/>
</dbReference>
<dbReference type="InterPro" id="IPR001179">
    <property type="entry name" value="PPIase_FKBP_dom"/>
</dbReference>
<dbReference type="InterPro" id="IPR011990">
    <property type="entry name" value="TPR-like_helical_dom_sf"/>
</dbReference>
<dbReference type="InterPro" id="IPR019734">
    <property type="entry name" value="TPR_rpt"/>
</dbReference>
<dbReference type="PANTHER" id="PTHR46512">
    <property type="entry name" value="PEPTIDYLPROLYL ISOMERASE"/>
    <property type="match status" value="1"/>
</dbReference>
<dbReference type="PANTHER" id="PTHR46512:SF9">
    <property type="entry name" value="PEPTIDYLPROLYL ISOMERASE"/>
    <property type="match status" value="1"/>
</dbReference>
<dbReference type="Pfam" id="PF00254">
    <property type="entry name" value="FKBP_C"/>
    <property type="match status" value="2"/>
</dbReference>
<dbReference type="Pfam" id="PF00515">
    <property type="entry name" value="TPR_1"/>
    <property type="match status" value="1"/>
</dbReference>
<dbReference type="Pfam" id="PF13181">
    <property type="entry name" value="TPR_8"/>
    <property type="match status" value="1"/>
</dbReference>
<dbReference type="SMART" id="SM00028">
    <property type="entry name" value="TPR"/>
    <property type="match status" value="3"/>
</dbReference>
<dbReference type="SUPFAM" id="SSF54534">
    <property type="entry name" value="FKBP-like"/>
    <property type="match status" value="2"/>
</dbReference>
<dbReference type="SUPFAM" id="SSF48452">
    <property type="entry name" value="TPR-like"/>
    <property type="match status" value="1"/>
</dbReference>
<dbReference type="PROSITE" id="PS50059">
    <property type="entry name" value="FKBP_PPIASE"/>
    <property type="match status" value="2"/>
</dbReference>
<dbReference type="PROSITE" id="PS50005">
    <property type="entry name" value="TPR"/>
    <property type="match status" value="3"/>
</dbReference>
<dbReference type="PROSITE" id="PS50293">
    <property type="entry name" value="TPR_REGION"/>
    <property type="match status" value="1"/>
</dbReference>
<proteinExistence type="evidence at protein level"/>
<sequence length="457" mass="51169">MTTDEGAKNSRGNPAATVAEQGEDVTSKKDRGVLKIVKRVGHGEETPMIGDRVYVHYNGKLANGKKFDSSHDRNEPFVFSIGKGQVIKAWDIGVATMKKGEICHLLCKPEYAYGATGSLPKIPSNATLFFEVELLDFKGEDLLEDGGIIRRTKRRGEGYSNPNEGARVQIHLEGRCGGRVFDCRDVAFTVGEGEDHDIPIGIDKALEKMQREEQCILHLGPRYGFGEAGKPKFGIEPNAELIYEVTLKSFEKAKESWEMDTKEKLEQAAIVKEKGTVYFKGGKYVQAVIQYGKIVSWLEMEYGLSEKESKASESFLLAAFLNLAMCYLKLREYTKAVECCDKALGLDSANEKGLYRRGEAQLLMNEFESAKGDFEKVLEVNPQNKAARLQIFMCQKKAKEHNERDRRTYANMFKKFAEQDAKEEANKAMSKKTSEGVTNEKLTASHAVEEEKPEGHV</sequence>
<protein>
    <recommendedName>
        <fullName>Peptidyl-prolyl cis-trans isomerase FKBP5</fullName>
        <shortName>PPIase FKBP5</shortName>
        <ecNumber evidence="1">5.2.1.8</ecNumber>
    </recommendedName>
    <alternativeName>
        <fullName>51 kDa FK506-binding protein</fullName>
        <shortName>51 kDa FKBP</shortName>
        <shortName>FKBP-51</shortName>
    </alternativeName>
    <alternativeName>
        <fullName>FK506-binding protein 5</fullName>
        <shortName>FKBP-5</shortName>
    </alternativeName>
    <alternativeName>
        <fullName>Rotamase</fullName>
    </alternativeName>
</protein>
<reference key="1">
    <citation type="journal article" date="2000" name="Endocrinology">
        <title>Squirrel monkey immunophilin FKBP51 is a potent inhibitor of glucocorticoid receptor binding.</title>
        <authorList>
            <person name="Denny W.B."/>
            <person name="Valentine D.L."/>
            <person name="Reynolds P.D."/>
            <person name="Smith D.F."/>
            <person name="Scammell J.G."/>
        </authorList>
    </citation>
    <scope>NUCLEOTIDE SEQUENCE [MRNA]</scope>
    <scope>FUNCTION</scope>
    <scope>SUBCELLULAR LOCATION</scope>
    <source>
        <tissue>B-cell</tissue>
    </source>
</reference>
<reference key="2">
    <citation type="journal article" date="2003" name="Proc. Natl. Acad. Sci. U.S.A.">
        <title>Structure of the large FK506-binding protein FKBP51, an Hsp90-binding protein and a component of steroid receptor complexes.</title>
        <authorList>
            <person name="Sinars C.R."/>
            <person name="Cheung-Flynn J."/>
            <person name="Rimerman R.A."/>
            <person name="Scammell J.G."/>
            <person name="Smith D.F."/>
            <person name="Clardy J."/>
        </authorList>
    </citation>
    <scope>X-RAY CRYSTALLOGRAPHY (2.8 ANGSTROMS) OF 28-421</scope>
    <scope>FUNCTION</scope>
</reference>
<organism>
    <name type="scientific">Saimiri boliviensis boliviensis</name>
    <name type="common">Bolivian squirrel monkey</name>
    <dbReference type="NCBI Taxonomy" id="39432"/>
    <lineage>
        <taxon>Eukaryota</taxon>
        <taxon>Metazoa</taxon>
        <taxon>Chordata</taxon>
        <taxon>Craniata</taxon>
        <taxon>Vertebrata</taxon>
        <taxon>Euteleostomi</taxon>
        <taxon>Mammalia</taxon>
        <taxon>Eutheria</taxon>
        <taxon>Euarchontoglires</taxon>
        <taxon>Primates</taxon>
        <taxon>Haplorrhini</taxon>
        <taxon>Platyrrhini</taxon>
        <taxon>Cebidae</taxon>
        <taxon>Saimiriinae</taxon>
        <taxon>Saimiri</taxon>
    </lineage>
</organism>
<evidence type="ECO:0000250" key="1">
    <source>
        <dbReference type="UniProtKB" id="Q13451"/>
    </source>
</evidence>
<evidence type="ECO:0000250" key="2">
    <source>
        <dbReference type="UniProtKB" id="Q64378"/>
    </source>
</evidence>
<evidence type="ECO:0000255" key="3">
    <source>
        <dbReference type="PROSITE-ProRule" id="PRU00277"/>
    </source>
</evidence>
<evidence type="ECO:0000256" key="4">
    <source>
        <dbReference type="SAM" id="MobiDB-lite"/>
    </source>
</evidence>
<evidence type="ECO:0000269" key="5">
    <source>
    </source>
</evidence>
<evidence type="ECO:0000269" key="6">
    <source>
    </source>
</evidence>
<evidence type="ECO:0007829" key="7">
    <source>
        <dbReference type="PDB" id="1KT1"/>
    </source>
</evidence>
<keyword id="KW-0002">3D-structure</keyword>
<keyword id="KW-0007">Acetylation</keyword>
<keyword id="KW-0143">Chaperone</keyword>
<keyword id="KW-0963">Cytoplasm</keyword>
<keyword id="KW-0413">Isomerase</keyword>
<keyword id="KW-0539">Nucleus</keyword>
<keyword id="KW-0597">Phosphoprotein</keyword>
<keyword id="KW-1185">Reference proteome</keyword>
<keyword id="KW-0677">Repeat</keyword>
<keyword id="KW-0697">Rotamase</keyword>
<keyword id="KW-0802">TPR repeat</keyword>
<keyword id="KW-0832">Ubl conjugation</keyword>
<accession>Q9XSH5</accession>